<gene>
    <name evidence="1" type="primary">folD</name>
    <name type="ordered locus">Pcal_1897</name>
</gene>
<sequence>MSGKPLHEKTKEWARRHVRLLEEVGVTPKLAVLLLNDDPVELETQRRYVSLKARDVREVGGEVEIYELVDVPPERRSKEALYLIERLNRRDDVTGILIQKPVPPFVDEDLLFQRLSPEKDVDALTPENKKRLLALFDLDRDLLPCTPAGILELLQMYGVEVKGRDVTVVGKGELVGKPLAVMLMQLDASVSVLHALTRDKLRYVKEADIVISAVGRPPELYRDNPWRLTGDMVKEGAVVVGVGGKVDPATGKWYFDVDEKSVAEKASYLTPNLGGVGLATRARLLKNLIRASYNVARATAAPRLLKAF</sequence>
<name>FOLD_PYRCJ</name>
<reference key="1">
    <citation type="submission" date="2007-02" db="EMBL/GenBank/DDBJ databases">
        <title>Complete sequence of Pyrobaculum calidifontis JCM 11548.</title>
        <authorList>
            <consortium name="US DOE Joint Genome Institute"/>
            <person name="Copeland A."/>
            <person name="Lucas S."/>
            <person name="Lapidus A."/>
            <person name="Barry K."/>
            <person name="Glavina del Rio T."/>
            <person name="Dalin E."/>
            <person name="Tice H."/>
            <person name="Pitluck S."/>
            <person name="Chain P."/>
            <person name="Malfatti S."/>
            <person name="Shin M."/>
            <person name="Vergez L."/>
            <person name="Schmutz J."/>
            <person name="Larimer F."/>
            <person name="Land M."/>
            <person name="Hauser L."/>
            <person name="Kyrpides N."/>
            <person name="Mikhailova N."/>
            <person name="Cozen A.E."/>
            <person name="Fitz-Gibbon S.T."/>
            <person name="House C.H."/>
            <person name="Saltikov C."/>
            <person name="Lowe T.M."/>
            <person name="Richardson P."/>
        </authorList>
    </citation>
    <scope>NUCLEOTIDE SEQUENCE [LARGE SCALE GENOMIC DNA]</scope>
    <source>
        <strain>DSM 21063 / JCM 11548 / VA1</strain>
    </source>
</reference>
<evidence type="ECO:0000255" key="1">
    <source>
        <dbReference type="HAMAP-Rule" id="MF_01576"/>
    </source>
</evidence>
<dbReference type="EC" id="1.5.1.5" evidence="1"/>
<dbReference type="EC" id="3.5.4.9" evidence="1"/>
<dbReference type="EMBL" id="CP000561">
    <property type="protein sequence ID" value="ABO09313.1"/>
    <property type="molecule type" value="Genomic_DNA"/>
</dbReference>
<dbReference type="SMR" id="A3MXE6"/>
<dbReference type="STRING" id="410359.Pcal_1897"/>
<dbReference type="KEGG" id="pcl:Pcal_1897"/>
<dbReference type="eggNOG" id="arCOG04538">
    <property type="taxonomic scope" value="Archaea"/>
</dbReference>
<dbReference type="HOGENOM" id="CLU_034045_2_1_2"/>
<dbReference type="UniPathway" id="UPA00193"/>
<dbReference type="Proteomes" id="UP000001431">
    <property type="component" value="Chromosome"/>
</dbReference>
<dbReference type="GO" id="GO:0005829">
    <property type="term" value="C:cytosol"/>
    <property type="evidence" value="ECO:0007669"/>
    <property type="project" value="TreeGrafter"/>
</dbReference>
<dbReference type="GO" id="GO:0004477">
    <property type="term" value="F:methenyltetrahydrofolate cyclohydrolase activity"/>
    <property type="evidence" value="ECO:0007669"/>
    <property type="project" value="UniProtKB-UniRule"/>
</dbReference>
<dbReference type="GO" id="GO:0004488">
    <property type="term" value="F:methylenetetrahydrofolate dehydrogenase (NADP+) activity"/>
    <property type="evidence" value="ECO:0007669"/>
    <property type="project" value="UniProtKB-UniRule"/>
</dbReference>
<dbReference type="GO" id="GO:0000105">
    <property type="term" value="P:L-histidine biosynthetic process"/>
    <property type="evidence" value="ECO:0007669"/>
    <property type="project" value="UniProtKB-KW"/>
</dbReference>
<dbReference type="GO" id="GO:0009086">
    <property type="term" value="P:methionine biosynthetic process"/>
    <property type="evidence" value="ECO:0007669"/>
    <property type="project" value="UniProtKB-KW"/>
</dbReference>
<dbReference type="GO" id="GO:0006164">
    <property type="term" value="P:purine nucleotide biosynthetic process"/>
    <property type="evidence" value="ECO:0007669"/>
    <property type="project" value="UniProtKB-KW"/>
</dbReference>
<dbReference type="GO" id="GO:0035999">
    <property type="term" value="P:tetrahydrofolate interconversion"/>
    <property type="evidence" value="ECO:0007669"/>
    <property type="project" value="UniProtKB-UniRule"/>
</dbReference>
<dbReference type="CDD" id="cd01080">
    <property type="entry name" value="NAD_bind_m-THF_DH_Cyclohyd"/>
    <property type="match status" value="1"/>
</dbReference>
<dbReference type="Gene3D" id="3.40.50.10860">
    <property type="entry name" value="Leucine Dehydrogenase, chain A, domain 1"/>
    <property type="match status" value="1"/>
</dbReference>
<dbReference type="Gene3D" id="3.40.50.720">
    <property type="entry name" value="NAD(P)-binding Rossmann-like Domain"/>
    <property type="match status" value="1"/>
</dbReference>
<dbReference type="HAMAP" id="MF_01576">
    <property type="entry name" value="THF_DHG_CYH"/>
    <property type="match status" value="1"/>
</dbReference>
<dbReference type="InterPro" id="IPR046346">
    <property type="entry name" value="Aminoacid_DH-like_N_sf"/>
</dbReference>
<dbReference type="InterPro" id="IPR036291">
    <property type="entry name" value="NAD(P)-bd_dom_sf"/>
</dbReference>
<dbReference type="InterPro" id="IPR000672">
    <property type="entry name" value="THF_DH/CycHdrlase"/>
</dbReference>
<dbReference type="InterPro" id="IPR020630">
    <property type="entry name" value="THF_DH/CycHdrlase_cat_dom"/>
</dbReference>
<dbReference type="InterPro" id="IPR020631">
    <property type="entry name" value="THF_DH/CycHdrlase_NAD-bd_dom"/>
</dbReference>
<dbReference type="PANTHER" id="PTHR48099:SF5">
    <property type="entry name" value="C-1-TETRAHYDROFOLATE SYNTHASE, CYTOPLASMIC"/>
    <property type="match status" value="1"/>
</dbReference>
<dbReference type="PANTHER" id="PTHR48099">
    <property type="entry name" value="C-1-TETRAHYDROFOLATE SYNTHASE, CYTOPLASMIC-RELATED"/>
    <property type="match status" value="1"/>
</dbReference>
<dbReference type="Pfam" id="PF00763">
    <property type="entry name" value="THF_DHG_CYH"/>
    <property type="match status" value="1"/>
</dbReference>
<dbReference type="Pfam" id="PF02882">
    <property type="entry name" value="THF_DHG_CYH_C"/>
    <property type="match status" value="1"/>
</dbReference>
<dbReference type="PRINTS" id="PR00085">
    <property type="entry name" value="THFDHDRGNASE"/>
</dbReference>
<dbReference type="SUPFAM" id="SSF53223">
    <property type="entry name" value="Aminoacid dehydrogenase-like, N-terminal domain"/>
    <property type="match status" value="1"/>
</dbReference>
<dbReference type="SUPFAM" id="SSF51735">
    <property type="entry name" value="NAD(P)-binding Rossmann-fold domains"/>
    <property type="match status" value="1"/>
</dbReference>
<organism>
    <name type="scientific">Pyrobaculum calidifontis (strain DSM 21063 / JCM 11548 / VA1)</name>
    <dbReference type="NCBI Taxonomy" id="410359"/>
    <lineage>
        <taxon>Archaea</taxon>
        <taxon>Thermoproteota</taxon>
        <taxon>Thermoprotei</taxon>
        <taxon>Thermoproteales</taxon>
        <taxon>Thermoproteaceae</taxon>
        <taxon>Pyrobaculum</taxon>
    </lineage>
</organism>
<accession>A3MXE6</accession>
<protein>
    <recommendedName>
        <fullName evidence="1">Bifunctional protein FolD</fullName>
    </recommendedName>
    <domain>
        <recommendedName>
            <fullName evidence="1">Methylenetetrahydrofolate dehydrogenase</fullName>
            <ecNumber evidence="1">1.5.1.5</ecNumber>
        </recommendedName>
    </domain>
    <domain>
        <recommendedName>
            <fullName evidence="1">Methenyltetrahydrofolate cyclohydrolase</fullName>
            <ecNumber evidence="1">3.5.4.9</ecNumber>
        </recommendedName>
    </domain>
</protein>
<comment type="function">
    <text evidence="1">Catalyzes the oxidation of 5,10-methylenetetrahydrofolate to 5,10-methenyltetrahydrofolate and then the hydrolysis of 5,10-methenyltetrahydrofolate to 10-formyltetrahydrofolate.</text>
</comment>
<comment type="catalytic activity">
    <reaction evidence="1">
        <text>(6R)-5,10-methylene-5,6,7,8-tetrahydrofolate + NADP(+) = (6R)-5,10-methenyltetrahydrofolate + NADPH</text>
        <dbReference type="Rhea" id="RHEA:22812"/>
        <dbReference type="ChEBI" id="CHEBI:15636"/>
        <dbReference type="ChEBI" id="CHEBI:57455"/>
        <dbReference type="ChEBI" id="CHEBI:57783"/>
        <dbReference type="ChEBI" id="CHEBI:58349"/>
        <dbReference type="EC" id="1.5.1.5"/>
    </reaction>
</comment>
<comment type="catalytic activity">
    <reaction evidence="1">
        <text>(6R)-5,10-methenyltetrahydrofolate + H2O = (6R)-10-formyltetrahydrofolate + H(+)</text>
        <dbReference type="Rhea" id="RHEA:23700"/>
        <dbReference type="ChEBI" id="CHEBI:15377"/>
        <dbReference type="ChEBI" id="CHEBI:15378"/>
        <dbReference type="ChEBI" id="CHEBI:57455"/>
        <dbReference type="ChEBI" id="CHEBI:195366"/>
        <dbReference type="EC" id="3.5.4.9"/>
    </reaction>
</comment>
<comment type="pathway">
    <text evidence="1">One-carbon metabolism; tetrahydrofolate interconversion.</text>
</comment>
<comment type="subunit">
    <text evidence="1">Homodimer.</text>
</comment>
<comment type="similarity">
    <text evidence="1">Belongs to the tetrahydrofolate dehydrogenase/cyclohydrolase family.</text>
</comment>
<feature type="chain" id="PRO_0000305900" description="Bifunctional protein FolD">
    <location>
        <begin position="1"/>
        <end position="308"/>
    </location>
</feature>
<feature type="binding site" evidence="1">
    <location>
        <begin position="170"/>
        <end position="172"/>
    </location>
    <ligand>
        <name>NADP(+)</name>
        <dbReference type="ChEBI" id="CHEBI:58349"/>
    </ligand>
</feature>
<proteinExistence type="inferred from homology"/>
<keyword id="KW-0028">Amino-acid biosynthesis</keyword>
<keyword id="KW-0368">Histidine biosynthesis</keyword>
<keyword id="KW-0378">Hydrolase</keyword>
<keyword id="KW-0486">Methionine biosynthesis</keyword>
<keyword id="KW-0511">Multifunctional enzyme</keyword>
<keyword id="KW-0521">NADP</keyword>
<keyword id="KW-0554">One-carbon metabolism</keyword>
<keyword id="KW-0560">Oxidoreductase</keyword>
<keyword id="KW-0658">Purine biosynthesis</keyword>